<proteinExistence type="inferred from homology"/>
<sequence>MSVVITIDGPSGSGKGTICRLIAEASGFELLDSGALYRLTALATVEQGANSADEQQVAGIAASLDIKFIPQEGSTQVMLAGKDVTKAIRAEEIGMLASTVAAYPAVRQALLDRQRAFLTAKGLVADGRDMGTVVFPAAPLKIFLTASAQERANRRVKQLEQAGVASINYEQILSDIEKRDEQDRNRATAPLLPADDAVMLDSTALSIDEVKQQILGLAKARQLF</sequence>
<reference key="1">
    <citation type="journal article" date="2008" name="PLoS Genet.">
        <title>Complete genome sequence of the complex carbohydrate-degrading marine bacterium, Saccharophagus degradans strain 2-40 T.</title>
        <authorList>
            <person name="Weiner R.M."/>
            <person name="Taylor L.E. II"/>
            <person name="Henrissat B."/>
            <person name="Hauser L."/>
            <person name="Land M."/>
            <person name="Coutinho P.M."/>
            <person name="Rancurel C."/>
            <person name="Saunders E.H."/>
            <person name="Longmire A.G."/>
            <person name="Zhang H."/>
            <person name="Bayer E.A."/>
            <person name="Gilbert H.J."/>
            <person name="Larimer F."/>
            <person name="Zhulin I.B."/>
            <person name="Ekborg N.A."/>
            <person name="Lamed R."/>
            <person name="Richardson P.M."/>
            <person name="Borovok I."/>
            <person name="Hutcheson S."/>
        </authorList>
    </citation>
    <scope>NUCLEOTIDE SEQUENCE [LARGE SCALE GENOMIC DNA]</scope>
    <source>
        <strain>2-40 / ATCC 43961 / DSM 17024</strain>
    </source>
</reference>
<evidence type="ECO:0000255" key="1">
    <source>
        <dbReference type="HAMAP-Rule" id="MF_00238"/>
    </source>
</evidence>
<gene>
    <name evidence="1" type="primary">cmk</name>
    <name type="ordered locus">Sde_2140</name>
</gene>
<dbReference type="EC" id="2.7.4.25" evidence="1"/>
<dbReference type="EMBL" id="CP000282">
    <property type="protein sequence ID" value="ABD81400.1"/>
    <property type="molecule type" value="Genomic_DNA"/>
</dbReference>
<dbReference type="RefSeq" id="WP_011468618.1">
    <property type="nucleotide sequence ID" value="NC_007912.1"/>
</dbReference>
<dbReference type="SMR" id="Q21IS9"/>
<dbReference type="STRING" id="203122.Sde_2140"/>
<dbReference type="GeneID" id="98613811"/>
<dbReference type="KEGG" id="sde:Sde_2140"/>
<dbReference type="eggNOG" id="COG0283">
    <property type="taxonomic scope" value="Bacteria"/>
</dbReference>
<dbReference type="HOGENOM" id="CLU_079959_0_2_6"/>
<dbReference type="OrthoDB" id="9807434at2"/>
<dbReference type="Proteomes" id="UP000001947">
    <property type="component" value="Chromosome"/>
</dbReference>
<dbReference type="GO" id="GO:0005829">
    <property type="term" value="C:cytosol"/>
    <property type="evidence" value="ECO:0007669"/>
    <property type="project" value="TreeGrafter"/>
</dbReference>
<dbReference type="GO" id="GO:0005524">
    <property type="term" value="F:ATP binding"/>
    <property type="evidence" value="ECO:0007669"/>
    <property type="project" value="UniProtKB-UniRule"/>
</dbReference>
<dbReference type="GO" id="GO:0036430">
    <property type="term" value="F:CMP kinase activity"/>
    <property type="evidence" value="ECO:0007669"/>
    <property type="project" value="RHEA"/>
</dbReference>
<dbReference type="GO" id="GO:0036431">
    <property type="term" value="F:dCMP kinase activity"/>
    <property type="evidence" value="ECO:0007669"/>
    <property type="project" value="RHEA"/>
</dbReference>
<dbReference type="GO" id="GO:0015949">
    <property type="term" value="P:nucleobase-containing small molecule interconversion"/>
    <property type="evidence" value="ECO:0007669"/>
    <property type="project" value="TreeGrafter"/>
</dbReference>
<dbReference type="GO" id="GO:0006220">
    <property type="term" value="P:pyrimidine nucleotide metabolic process"/>
    <property type="evidence" value="ECO:0007669"/>
    <property type="project" value="UniProtKB-UniRule"/>
</dbReference>
<dbReference type="CDD" id="cd02020">
    <property type="entry name" value="CMPK"/>
    <property type="match status" value="1"/>
</dbReference>
<dbReference type="Gene3D" id="3.40.50.300">
    <property type="entry name" value="P-loop containing nucleotide triphosphate hydrolases"/>
    <property type="match status" value="1"/>
</dbReference>
<dbReference type="HAMAP" id="MF_00238">
    <property type="entry name" value="Cytidyl_kinase_type1"/>
    <property type="match status" value="1"/>
</dbReference>
<dbReference type="InterPro" id="IPR003136">
    <property type="entry name" value="Cytidylate_kin"/>
</dbReference>
<dbReference type="InterPro" id="IPR011994">
    <property type="entry name" value="Cytidylate_kinase_dom"/>
</dbReference>
<dbReference type="InterPro" id="IPR027417">
    <property type="entry name" value="P-loop_NTPase"/>
</dbReference>
<dbReference type="NCBIfam" id="TIGR00017">
    <property type="entry name" value="cmk"/>
    <property type="match status" value="1"/>
</dbReference>
<dbReference type="PANTHER" id="PTHR21299:SF2">
    <property type="entry name" value="CYTIDYLATE KINASE"/>
    <property type="match status" value="1"/>
</dbReference>
<dbReference type="PANTHER" id="PTHR21299">
    <property type="entry name" value="CYTIDYLATE KINASE/PANTOATE-BETA-ALANINE LIGASE"/>
    <property type="match status" value="1"/>
</dbReference>
<dbReference type="Pfam" id="PF02224">
    <property type="entry name" value="Cytidylate_kin"/>
    <property type="match status" value="1"/>
</dbReference>
<dbReference type="SUPFAM" id="SSF52540">
    <property type="entry name" value="P-loop containing nucleoside triphosphate hydrolases"/>
    <property type="match status" value="1"/>
</dbReference>
<organism>
    <name type="scientific">Saccharophagus degradans (strain 2-40 / ATCC 43961 / DSM 17024)</name>
    <dbReference type="NCBI Taxonomy" id="203122"/>
    <lineage>
        <taxon>Bacteria</taxon>
        <taxon>Pseudomonadati</taxon>
        <taxon>Pseudomonadota</taxon>
        <taxon>Gammaproteobacteria</taxon>
        <taxon>Cellvibrionales</taxon>
        <taxon>Cellvibrionaceae</taxon>
        <taxon>Saccharophagus</taxon>
    </lineage>
</organism>
<feature type="chain" id="PRO_1000078346" description="Cytidylate kinase">
    <location>
        <begin position="1"/>
        <end position="224"/>
    </location>
</feature>
<feature type="binding site" evidence="1">
    <location>
        <begin position="9"/>
        <end position="17"/>
    </location>
    <ligand>
        <name>ATP</name>
        <dbReference type="ChEBI" id="CHEBI:30616"/>
    </ligand>
</feature>
<protein>
    <recommendedName>
        <fullName evidence="1">Cytidylate kinase</fullName>
        <shortName evidence="1">CK</shortName>
        <ecNumber evidence="1">2.7.4.25</ecNumber>
    </recommendedName>
    <alternativeName>
        <fullName evidence="1">Cytidine monophosphate kinase</fullName>
        <shortName evidence="1">CMP kinase</shortName>
    </alternativeName>
</protein>
<keyword id="KW-0067">ATP-binding</keyword>
<keyword id="KW-0963">Cytoplasm</keyword>
<keyword id="KW-0418">Kinase</keyword>
<keyword id="KW-0547">Nucleotide-binding</keyword>
<keyword id="KW-1185">Reference proteome</keyword>
<keyword id="KW-0808">Transferase</keyword>
<accession>Q21IS9</accession>
<comment type="catalytic activity">
    <reaction evidence="1">
        <text>CMP + ATP = CDP + ADP</text>
        <dbReference type="Rhea" id="RHEA:11600"/>
        <dbReference type="ChEBI" id="CHEBI:30616"/>
        <dbReference type="ChEBI" id="CHEBI:58069"/>
        <dbReference type="ChEBI" id="CHEBI:60377"/>
        <dbReference type="ChEBI" id="CHEBI:456216"/>
        <dbReference type="EC" id="2.7.4.25"/>
    </reaction>
</comment>
<comment type="catalytic activity">
    <reaction evidence="1">
        <text>dCMP + ATP = dCDP + ADP</text>
        <dbReference type="Rhea" id="RHEA:25094"/>
        <dbReference type="ChEBI" id="CHEBI:30616"/>
        <dbReference type="ChEBI" id="CHEBI:57566"/>
        <dbReference type="ChEBI" id="CHEBI:58593"/>
        <dbReference type="ChEBI" id="CHEBI:456216"/>
        <dbReference type="EC" id="2.7.4.25"/>
    </reaction>
</comment>
<comment type="subcellular location">
    <subcellularLocation>
        <location evidence="1">Cytoplasm</location>
    </subcellularLocation>
</comment>
<comment type="similarity">
    <text evidence="1">Belongs to the cytidylate kinase family. Type 1 subfamily.</text>
</comment>
<name>KCY_SACD2</name>